<keyword id="KW-0131">Cell cycle</keyword>
<keyword id="KW-0132">Cell division</keyword>
<keyword id="KW-0342">GTP-binding</keyword>
<keyword id="KW-0460">Magnesium</keyword>
<keyword id="KW-0479">Metal-binding</keyword>
<keyword id="KW-0547">Nucleotide-binding</keyword>
<keyword id="KW-0717">Septation</keyword>
<name>ENGB_PYRAB</name>
<feature type="chain" id="PRO_0000157813" description="Probable GTP-binding protein EngB">
    <location>
        <begin position="1"/>
        <end position="211"/>
    </location>
</feature>
<feature type="domain" description="EngB-type G" evidence="1">
    <location>
        <begin position="21"/>
        <end position="205"/>
    </location>
</feature>
<feature type="binding site" evidence="1">
    <location>
        <begin position="29"/>
        <end position="36"/>
    </location>
    <ligand>
        <name>GTP</name>
        <dbReference type="ChEBI" id="CHEBI:37565"/>
    </ligand>
</feature>
<feature type="binding site" evidence="1">
    <location>
        <position position="36"/>
    </location>
    <ligand>
        <name>Mg(2+)</name>
        <dbReference type="ChEBI" id="CHEBI:18420"/>
    </ligand>
</feature>
<feature type="binding site" evidence="1">
    <location>
        <begin position="54"/>
        <end position="58"/>
    </location>
    <ligand>
        <name>GTP</name>
        <dbReference type="ChEBI" id="CHEBI:37565"/>
    </ligand>
</feature>
<feature type="binding site" evidence="1">
    <location>
        <position position="56"/>
    </location>
    <ligand>
        <name>Mg(2+)</name>
        <dbReference type="ChEBI" id="CHEBI:18420"/>
    </ligand>
</feature>
<feature type="binding site" evidence="1">
    <location>
        <begin position="71"/>
        <end position="74"/>
    </location>
    <ligand>
        <name>GTP</name>
        <dbReference type="ChEBI" id="CHEBI:37565"/>
    </ligand>
</feature>
<feature type="binding site" evidence="1">
    <location>
        <begin position="151"/>
        <end position="154"/>
    </location>
    <ligand>
        <name>GTP</name>
        <dbReference type="ChEBI" id="CHEBI:37565"/>
    </ligand>
</feature>
<feature type="binding site" evidence="1">
    <location>
        <begin position="184"/>
        <end position="186"/>
    </location>
    <ligand>
        <name>GTP</name>
        <dbReference type="ChEBI" id="CHEBI:37565"/>
    </ligand>
</feature>
<evidence type="ECO:0000255" key="1">
    <source>
        <dbReference type="HAMAP-Rule" id="MF_00321"/>
    </source>
</evidence>
<evidence type="ECO:0000305" key="2"/>
<dbReference type="EMBL" id="AJ248283">
    <property type="protein sequence ID" value="CAB49110.1"/>
    <property type="status" value="ALT_INIT"/>
    <property type="molecule type" value="Genomic_DNA"/>
</dbReference>
<dbReference type="EMBL" id="HE613800">
    <property type="protein sequence ID" value="CCE69562.1"/>
    <property type="molecule type" value="Genomic_DNA"/>
</dbReference>
<dbReference type="PIR" id="G75207">
    <property type="entry name" value="G75207"/>
</dbReference>
<dbReference type="RefSeq" id="WP_010867310.1">
    <property type="nucleotide sequence ID" value="NC_000868.1"/>
</dbReference>
<dbReference type="SMR" id="Q9V288"/>
<dbReference type="STRING" id="272844.PAB2234"/>
<dbReference type="KEGG" id="pab:PAB2234"/>
<dbReference type="PATRIC" id="fig|272844.11.peg.200"/>
<dbReference type="eggNOG" id="arCOG00355">
    <property type="taxonomic scope" value="Archaea"/>
</dbReference>
<dbReference type="HOGENOM" id="CLU_033732_3_0_2"/>
<dbReference type="OrthoDB" id="65113at2157"/>
<dbReference type="PhylomeDB" id="Q9V288"/>
<dbReference type="Proteomes" id="UP000000810">
    <property type="component" value="Chromosome"/>
</dbReference>
<dbReference type="Proteomes" id="UP000009139">
    <property type="component" value="Chromosome"/>
</dbReference>
<dbReference type="GO" id="GO:0005525">
    <property type="term" value="F:GTP binding"/>
    <property type="evidence" value="ECO:0007669"/>
    <property type="project" value="UniProtKB-UniRule"/>
</dbReference>
<dbReference type="GO" id="GO:0046872">
    <property type="term" value="F:metal ion binding"/>
    <property type="evidence" value="ECO:0007669"/>
    <property type="project" value="UniProtKB-KW"/>
</dbReference>
<dbReference type="GO" id="GO:0051301">
    <property type="term" value="P:cell division"/>
    <property type="evidence" value="ECO:0007669"/>
    <property type="project" value="UniProtKB-KW"/>
</dbReference>
<dbReference type="CDD" id="cd01876">
    <property type="entry name" value="YihA_EngB"/>
    <property type="match status" value="1"/>
</dbReference>
<dbReference type="Gene3D" id="3.40.50.300">
    <property type="entry name" value="P-loop containing nucleotide triphosphate hydrolases"/>
    <property type="match status" value="1"/>
</dbReference>
<dbReference type="HAMAP" id="MF_00321">
    <property type="entry name" value="GTPase_EngB"/>
    <property type="match status" value="1"/>
</dbReference>
<dbReference type="InterPro" id="IPR030393">
    <property type="entry name" value="G_ENGB_dom"/>
</dbReference>
<dbReference type="InterPro" id="IPR006073">
    <property type="entry name" value="GTP-bd"/>
</dbReference>
<dbReference type="InterPro" id="IPR019987">
    <property type="entry name" value="GTP-bd_ribosome_bio_YsxC"/>
</dbReference>
<dbReference type="InterPro" id="IPR027417">
    <property type="entry name" value="P-loop_NTPase"/>
</dbReference>
<dbReference type="InterPro" id="IPR005225">
    <property type="entry name" value="Small_GTP-bd"/>
</dbReference>
<dbReference type="NCBIfam" id="NF003255">
    <property type="entry name" value="PRK04213.1"/>
    <property type="match status" value="1"/>
</dbReference>
<dbReference type="NCBIfam" id="TIGR00231">
    <property type="entry name" value="small_GTP"/>
    <property type="match status" value="1"/>
</dbReference>
<dbReference type="PANTHER" id="PTHR11649:SF13">
    <property type="entry name" value="ENGB-TYPE G DOMAIN-CONTAINING PROTEIN"/>
    <property type="match status" value="1"/>
</dbReference>
<dbReference type="PANTHER" id="PTHR11649">
    <property type="entry name" value="MSS1/TRME-RELATED GTP-BINDING PROTEIN"/>
    <property type="match status" value="1"/>
</dbReference>
<dbReference type="Pfam" id="PF01926">
    <property type="entry name" value="MMR_HSR1"/>
    <property type="match status" value="1"/>
</dbReference>
<dbReference type="PRINTS" id="PR00449">
    <property type="entry name" value="RASTRNSFRMNG"/>
</dbReference>
<dbReference type="SUPFAM" id="SSF52540">
    <property type="entry name" value="P-loop containing nucleoside triphosphate hydrolases"/>
    <property type="match status" value="1"/>
</dbReference>
<dbReference type="PROSITE" id="PS51706">
    <property type="entry name" value="G_ENGB"/>
    <property type="match status" value="1"/>
</dbReference>
<gene>
    <name evidence="1" type="primary">engB</name>
    <name type="ordered locus">PYRAB01860</name>
    <name type="ORF">PAB2234</name>
</gene>
<organism>
    <name type="scientific">Pyrococcus abyssi (strain GE5 / Orsay)</name>
    <dbReference type="NCBI Taxonomy" id="272844"/>
    <lineage>
        <taxon>Archaea</taxon>
        <taxon>Methanobacteriati</taxon>
        <taxon>Methanobacteriota</taxon>
        <taxon>Thermococci</taxon>
        <taxon>Thermococcales</taxon>
        <taxon>Thermococcaceae</taxon>
        <taxon>Pyrococcus</taxon>
    </lineage>
</organism>
<proteinExistence type="inferred from homology"/>
<sequence length="211" mass="24731">MISFFFKLFQKFINYTDIPLLMATIVFVGRSNVGKSTLIYRLTGKRVRRGKRPGVTRKIIEIEWKNHKIIDMPGFGFMAGLPKEVQERIKDEIVHFIEDNASKIDVAVLVVDGKAAPEIIERWEKRGEIPIDVEFYQFLRELNIPTVVAVNKLDKIKNVQRVVHFLAEKFEVPWDEIDKTFIPISAKFGDNVEKLKNRIYEIIRERRGQRE</sequence>
<reference key="1">
    <citation type="journal article" date="2003" name="Mol. Microbiol.">
        <title>An integrated analysis of the genome of the hyperthermophilic archaeon Pyrococcus abyssi.</title>
        <authorList>
            <person name="Cohen G.N."/>
            <person name="Barbe V."/>
            <person name="Flament D."/>
            <person name="Galperin M."/>
            <person name="Heilig R."/>
            <person name="Lecompte O."/>
            <person name="Poch O."/>
            <person name="Prieur D."/>
            <person name="Querellou J."/>
            <person name="Ripp R."/>
            <person name="Thierry J.-C."/>
            <person name="Van der Oost J."/>
            <person name="Weissenbach J."/>
            <person name="Zivanovic Y."/>
            <person name="Forterre P."/>
        </authorList>
    </citation>
    <scope>NUCLEOTIDE SEQUENCE [LARGE SCALE GENOMIC DNA]</scope>
    <source>
        <strain>GE5 / Orsay</strain>
    </source>
</reference>
<reference key="2">
    <citation type="journal article" date="2012" name="Curr. Microbiol.">
        <title>Re-annotation of two hyperthermophilic archaea Pyrococcus abyssi GE5 and Pyrococcus furiosus DSM 3638.</title>
        <authorList>
            <person name="Gao J."/>
            <person name="Wang J."/>
        </authorList>
    </citation>
    <scope>GENOME REANNOTATION</scope>
    <source>
        <strain>GE5 / Orsay</strain>
    </source>
</reference>
<protein>
    <recommendedName>
        <fullName evidence="1">Probable GTP-binding protein EngB</fullName>
    </recommendedName>
</protein>
<comment type="function">
    <text evidence="1">Necessary for normal cell division and for the maintenance of normal septation.</text>
</comment>
<comment type="cofactor">
    <cofactor evidence="1">
        <name>Mg(2+)</name>
        <dbReference type="ChEBI" id="CHEBI:18420"/>
    </cofactor>
</comment>
<comment type="similarity">
    <text evidence="1">Belongs to the TRAFAC class TrmE-Era-EngA-EngB-Septin-like GTPase superfamily. EngB GTPase family.</text>
</comment>
<comment type="sequence caution" evidence="2">
    <conflict type="erroneous initiation">
        <sequence resource="EMBL-CDS" id="CAB49110"/>
    </conflict>
</comment>
<accession>Q9V288</accession>
<accession>G8ZG21</accession>